<comment type="function">
    <text evidence="1">Catalyzes amidations at positions B, D, E, and G on adenosylcobyrinic A,C-diamide. NH(2) groups are provided by glutamine, and one molecule of ATP is hydrogenolyzed for each amidation.</text>
</comment>
<comment type="pathway">
    <text evidence="1">Cofactor biosynthesis; adenosylcobalamin biosynthesis.</text>
</comment>
<comment type="similarity">
    <text evidence="1">Belongs to the CobB/CobQ family. CobQ subfamily.</text>
</comment>
<evidence type="ECO:0000255" key="1">
    <source>
        <dbReference type="HAMAP-Rule" id="MF_00028"/>
    </source>
</evidence>
<sequence>MATLMVQGCTSDAGKSTVVAALCRWFARRGYSVAPFKPQNMALNSAVTVDGGEIGRSTALQALACGVAPHSDMNPVLLKPQTDMGAQVIIRGKVLGNMQALDYHAYKNTASEAVLAAWQDLSSRFDVIIAEGAGSPAEINLRDNDIANMGFAERVDCPVIVVADIDRGGVFAHLTGTLDLLSESEQKRTLGFVINRFRGDLSLLQGGLDWLEERTGKPVFGVLPYLHGLTLDAEDAVDEQGAHDVGAFNVVVPLLPRMSNHNDFDPLRLHPQVNLQFVKMGEAWPSADLIILPGSKATRADLAFLRQQGWDKQIEKHLRYGGKVLGICGGFQMLGERIDDPEGLESDAGSSAGLGWLSMTTRLISGKQLRNVEGRFVAADTLIRGYEIHNGLTQGEALKHPMLVLEGRDDGAMSEDGRVMGCYLHGLFDVPDSCNTILEWAGLKSQRSVDYAVHREQQLDRLADMLEEHLDMTRLKQCMGS</sequence>
<protein>
    <recommendedName>
        <fullName evidence="1">Cobyric acid synthase</fullName>
    </recommendedName>
</protein>
<accession>Q0VLY5</accession>
<organism>
    <name type="scientific">Alcanivorax borkumensis (strain ATCC 700651 / DSM 11573 / NCIMB 13689 / SK2)</name>
    <dbReference type="NCBI Taxonomy" id="393595"/>
    <lineage>
        <taxon>Bacteria</taxon>
        <taxon>Pseudomonadati</taxon>
        <taxon>Pseudomonadota</taxon>
        <taxon>Gammaproteobacteria</taxon>
        <taxon>Oceanospirillales</taxon>
        <taxon>Alcanivoracaceae</taxon>
        <taxon>Alcanivorax</taxon>
    </lineage>
</organism>
<feature type="chain" id="PRO_0000332318" description="Cobyric acid synthase">
    <location>
        <begin position="1"/>
        <end position="481"/>
    </location>
</feature>
<feature type="domain" description="GATase cobBQ-type" evidence="1">
    <location>
        <begin position="247"/>
        <end position="433"/>
    </location>
</feature>
<feature type="active site" description="Nucleophile" evidence="1">
    <location>
        <position position="328"/>
    </location>
</feature>
<feature type="active site" evidence="1">
    <location>
        <position position="425"/>
    </location>
</feature>
<dbReference type="EMBL" id="AM286690">
    <property type="protein sequence ID" value="CAL17813.1"/>
    <property type="molecule type" value="Genomic_DNA"/>
</dbReference>
<dbReference type="RefSeq" id="WP_011589639.1">
    <property type="nucleotide sequence ID" value="NC_008260.1"/>
</dbReference>
<dbReference type="SMR" id="Q0VLY5"/>
<dbReference type="STRING" id="393595.ABO_2365"/>
<dbReference type="KEGG" id="abo:ABO_2365"/>
<dbReference type="eggNOG" id="COG1492">
    <property type="taxonomic scope" value="Bacteria"/>
</dbReference>
<dbReference type="HOGENOM" id="CLU_019250_2_2_6"/>
<dbReference type="OrthoDB" id="9808302at2"/>
<dbReference type="UniPathway" id="UPA00148"/>
<dbReference type="Proteomes" id="UP000008871">
    <property type="component" value="Chromosome"/>
</dbReference>
<dbReference type="GO" id="GO:0015420">
    <property type="term" value="F:ABC-type vitamin B12 transporter activity"/>
    <property type="evidence" value="ECO:0007669"/>
    <property type="project" value="UniProtKB-UniRule"/>
</dbReference>
<dbReference type="GO" id="GO:0003824">
    <property type="term" value="F:catalytic activity"/>
    <property type="evidence" value="ECO:0007669"/>
    <property type="project" value="InterPro"/>
</dbReference>
<dbReference type="GO" id="GO:0009236">
    <property type="term" value="P:cobalamin biosynthetic process"/>
    <property type="evidence" value="ECO:0007669"/>
    <property type="project" value="UniProtKB-UniRule"/>
</dbReference>
<dbReference type="CDD" id="cd05389">
    <property type="entry name" value="CobQ_N"/>
    <property type="match status" value="1"/>
</dbReference>
<dbReference type="CDD" id="cd01750">
    <property type="entry name" value="GATase1_CobQ"/>
    <property type="match status" value="1"/>
</dbReference>
<dbReference type="Gene3D" id="3.40.50.880">
    <property type="match status" value="1"/>
</dbReference>
<dbReference type="Gene3D" id="3.40.50.300">
    <property type="entry name" value="P-loop containing nucleotide triphosphate hydrolases"/>
    <property type="match status" value="1"/>
</dbReference>
<dbReference type="HAMAP" id="MF_00028">
    <property type="entry name" value="CobQ"/>
    <property type="match status" value="1"/>
</dbReference>
<dbReference type="InterPro" id="IPR029062">
    <property type="entry name" value="Class_I_gatase-like"/>
</dbReference>
<dbReference type="InterPro" id="IPR002586">
    <property type="entry name" value="CobQ/CobB/MinD/ParA_Nub-bd_dom"/>
</dbReference>
<dbReference type="InterPro" id="IPR033949">
    <property type="entry name" value="CobQ_GATase1"/>
</dbReference>
<dbReference type="InterPro" id="IPR047045">
    <property type="entry name" value="CobQ_N"/>
</dbReference>
<dbReference type="InterPro" id="IPR004459">
    <property type="entry name" value="CobQ_synth"/>
</dbReference>
<dbReference type="InterPro" id="IPR011698">
    <property type="entry name" value="GATase_3"/>
</dbReference>
<dbReference type="InterPro" id="IPR027417">
    <property type="entry name" value="P-loop_NTPase"/>
</dbReference>
<dbReference type="NCBIfam" id="TIGR00313">
    <property type="entry name" value="cobQ"/>
    <property type="match status" value="1"/>
</dbReference>
<dbReference type="NCBIfam" id="NF001989">
    <property type="entry name" value="PRK00784.1"/>
    <property type="match status" value="1"/>
</dbReference>
<dbReference type="PANTHER" id="PTHR21343:SF1">
    <property type="entry name" value="COBYRIC ACID SYNTHASE"/>
    <property type="match status" value="1"/>
</dbReference>
<dbReference type="PANTHER" id="PTHR21343">
    <property type="entry name" value="DETHIOBIOTIN SYNTHETASE"/>
    <property type="match status" value="1"/>
</dbReference>
<dbReference type="Pfam" id="PF01656">
    <property type="entry name" value="CbiA"/>
    <property type="match status" value="1"/>
</dbReference>
<dbReference type="Pfam" id="PF07685">
    <property type="entry name" value="GATase_3"/>
    <property type="match status" value="1"/>
</dbReference>
<dbReference type="SUPFAM" id="SSF52317">
    <property type="entry name" value="Class I glutamine amidotransferase-like"/>
    <property type="match status" value="1"/>
</dbReference>
<dbReference type="SUPFAM" id="SSF52540">
    <property type="entry name" value="P-loop containing nucleoside triphosphate hydrolases"/>
    <property type="match status" value="1"/>
</dbReference>
<dbReference type="PROSITE" id="PS51274">
    <property type="entry name" value="GATASE_COBBQ"/>
    <property type="match status" value="1"/>
</dbReference>
<keyword id="KW-0169">Cobalamin biosynthesis</keyword>
<keyword id="KW-0315">Glutamine amidotransferase</keyword>
<keyword id="KW-1185">Reference proteome</keyword>
<name>COBQ_ALCBS</name>
<proteinExistence type="inferred from homology"/>
<reference key="1">
    <citation type="journal article" date="2006" name="Nat. Biotechnol.">
        <title>Genome sequence of the ubiquitous hydrocarbon-degrading marine bacterium Alcanivorax borkumensis.</title>
        <authorList>
            <person name="Schneiker S."/>
            <person name="Martins dos Santos V.A.P."/>
            <person name="Bartels D."/>
            <person name="Bekel T."/>
            <person name="Brecht M."/>
            <person name="Buhrmester J."/>
            <person name="Chernikova T.N."/>
            <person name="Denaro R."/>
            <person name="Ferrer M."/>
            <person name="Gertler C."/>
            <person name="Goesmann A."/>
            <person name="Golyshina O.V."/>
            <person name="Kaminski F."/>
            <person name="Khachane A.N."/>
            <person name="Lang S."/>
            <person name="Linke B."/>
            <person name="McHardy A.C."/>
            <person name="Meyer F."/>
            <person name="Nechitaylo T."/>
            <person name="Puehler A."/>
            <person name="Regenhardt D."/>
            <person name="Rupp O."/>
            <person name="Sabirova J.S."/>
            <person name="Selbitschka W."/>
            <person name="Yakimov M.M."/>
            <person name="Timmis K.N."/>
            <person name="Vorhoelter F.-J."/>
            <person name="Weidner S."/>
            <person name="Kaiser O."/>
            <person name="Golyshin P.N."/>
        </authorList>
    </citation>
    <scope>NUCLEOTIDE SEQUENCE [LARGE SCALE GENOMIC DNA]</scope>
    <source>
        <strain>ATCC 700651 / DSM 11573 / NCIMB 13689 / SK2</strain>
    </source>
</reference>
<gene>
    <name evidence="1" type="primary">cobQ</name>
    <name type="ordered locus">ABO_2365</name>
</gene>